<dbReference type="EC" id="5.4.2.10" evidence="1"/>
<dbReference type="EMBL" id="CP000789">
    <property type="protein sequence ID" value="ABU72347.1"/>
    <property type="molecule type" value="Genomic_DNA"/>
</dbReference>
<dbReference type="RefSeq" id="WP_012128825.1">
    <property type="nucleotide sequence ID" value="NC_009783.1"/>
</dbReference>
<dbReference type="SMR" id="A7MUV2"/>
<dbReference type="KEGG" id="vha:VIBHAR_03402"/>
<dbReference type="PATRIC" id="fig|338187.25.peg.2796"/>
<dbReference type="Proteomes" id="UP000008152">
    <property type="component" value="Chromosome I"/>
</dbReference>
<dbReference type="GO" id="GO:0005829">
    <property type="term" value="C:cytosol"/>
    <property type="evidence" value="ECO:0007669"/>
    <property type="project" value="TreeGrafter"/>
</dbReference>
<dbReference type="GO" id="GO:0000287">
    <property type="term" value="F:magnesium ion binding"/>
    <property type="evidence" value="ECO:0007669"/>
    <property type="project" value="UniProtKB-UniRule"/>
</dbReference>
<dbReference type="GO" id="GO:0008966">
    <property type="term" value="F:phosphoglucosamine mutase activity"/>
    <property type="evidence" value="ECO:0007669"/>
    <property type="project" value="UniProtKB-UniRule"/>
</dbReference>
<dbReference type="GO" id="GO:0004615">
    <property type="term" value="F:phosphomannomutase activity"/>
    <property type="evidence" value="ECO:0007669"/>
    <property type="project" value="TreeGrafter"/>
</dbReference>
<dbReference type="GO" id="GO:0005975">
    <property type="term" value="P:carbohydrate metabolic process"/>
    <property type="evidence" value="ECO:0007669"/>
    <property type="project" value="InterPro"/>
</dbReference>
<dbReference type="GO" id="GO:0009252">
    <property type="term" value="P:peptidoglycan biosynthetic process"/>
    <property type="evidence" value="ECO:0007669"/>
    <property type="project" value="TreeGrafter"/>
</dbReference>
<dbReference type="GO" id="GO:0006048">
    <property type="term" value="P:UDP-N-acetylglucosamine biosynthetic process"/>
    <property type="evidence" value="ECO:0007669"/>
    <property type="project" value="TreeGrafter"/>
</dbReference>
<dbReference type="CDD" id="cd05802">
    <property type="entry name" value="GlmM"/>
    <property type="match status" value="1"/>
</dbReference>
<dbReference type="FunFam" id="3.30.310.50:FF:000001">
    <property type="entry name" value="Phosphoglucosamine mutase"/>
    <property type="match status" value="1"/>
</dbReference>
<dbReference type="FunFam" id="3.40.120.10:FF:000001">
    <property type="entry name" value="Phosphoglucosamine mutase"/>
    <property type="match status" value="1"/>
</dbReference>
<dbReference type="FunFam" id="3.40.120.10:FF:000003">
    <property type="entry name" value="Phosphoglucosamine mutase"/>
    <property type="match status" value="1"/>
</dbReference>
<dbReference type="Gene3D" id="3.40.120.10">
    <property type="entry name" value="Alpha-D-Glucose-1,6-Bisphosphate, subunit A, domain 3"/>
    <property type="match status" value="3"/>
</dbReference>
<dbReference type="Gene3D" id="3.30.310.50">
    <property type="entry name" value="Alpha-D-phosphohexomutase, C-terminal domain"/>
    <property type="match status" value="1"/>
</dbReference>
<dbReference type="HAMAP" id="MF_01554_B">
    <property type="entry name" value="GlmM_B"/>
    <property type="match status" value="1"/>
</dbReference>
<dbReference type="InterPro" id="IPR005844">
    <property type="entry name" value="A-D-PHexomutase_a/b/a-I"/>
</dbReference>
<dbReference type="InterPro" id="IPR016055">
    <property type="entry name" value="A-D-PHexomutase_a/b/a-I/II/III"/>
</dbReference>
<dbReference type="InterPro" id="IPR005845">
    <property type="entry name" value="A-D-PHexomutase_a/b/a-II"/>
</dbReference>
<dbReference type="InterPro" id="IPR005846">
    <property type="entry name" value="A-D-PHexomutase_a/b/a-III"/>
</dbReference>
<dbReference type="InterPro" id="IPR005843">
    <property type="entry name" value="A-D-PHexomutase_C"/>
</dbReference>
<dbReference type="InterPro" id="IPR036900">
    <property type="entry name" value="A-D-PHexomutase_C_sf"/>
</dbReference>
<dbReference type="InterPro" id="IPR016066">
    <property type="entry name" value="A-D-PHexomutase_CS"/>
</dbReference>
<dbReference type="InterPro" id="IPR005841">
    <property type="entry name" value="Alpha-D-phosphohexomutase_SF"/>
</dbReference>
<dbReference type="InterPro" id="IPR006352">
    <property type="entry name" value="GlmM_bact"/>
</dbReference>
<dbReference type="InterPro" id="IPR050060">
    <property type="entry name" value="Phosphoglucosamine_mutase"/>
</dbReference>
<dbReference type="NCBIfam" id="TIGR01455">
    <property type="entry name" value="glmM"/>
    <property type="match status" value="1"/>
</dbReference>
<dbReference type="NCBIfam" id="NF008139">
    <property type="entry name" value="PRK10887.1"/>
    <property type="match status" value="1"/>
</dbReference>
<dbReference type="PANTHER" id="PTHR42946:SF1">
    <property type="entry name" value="PHOSPHOGLUCOMUTASE (ALPHA-D-GLUCOSE-1,6-BISPHOSPHATE-DEPENDENT)"/>
    <property type="match status" value="1"/>
</dbReference>
<dbReference type="PANTHER" id="PTHR42946">
    <property type="entry name" value="PHOSPHOHEXOSE MUTASE"/>
    <property type="match status" value="1"/>
</dbReference>
<dbReference type="Pfam" id="PF02878">
    <property type="entry name" value="PGM_PMM_I"/>
    <property type="match status" value="1"/>
</dbReference>
<dbReference type="Pfam" id="PF02879">
    <property type="entry name" value="PGM_PMM_II"/>
    <property type="match status" value="1"/>
</dbReference>
<dbReference type="Pfam" id="PF02880">
    <property type="entry name" value="PGM_PMM_III"/>
    <property type="match status" value="1"/>
</dbReference>
<dbReference type="Pfam" id="PF00408">
    <property type="entry name" value="PGM_PMM_IV"/>
    <property type="match status" value="1"/>
</dbReference>
<dbReference type="PRINTS" id="PR00509">
    <property type="entry name" value="PGMPMM"/>
</dbReference>
<dbReference type="SUPFAM" id="SSF55957">
    <property type="entry name" value="Phosphoglucomutase, C-terminal domain"/>
    <property type="match status" value="1"/>
</dbReference>
<dbReference type="SUPFAM" id="SSF53738">
    <property type="entry name" value="Phosphoglucomutase, first 3 domains"/>
    <property type="match status" value="3"/>
</dbReference>
<dbReference type="PROSITE" id="PS00710">
    <property type="entry name" value="PGM_PMM"/>
    <property type="match status" value="1"/>
</dbReference>
<sequence length="446" mass="47514">MSDKRRYFGTDGVRGKVGQYPITPDFVLKLGWAAGRVLAKQGTKKVIIGKDTRISGYMLESALEAGLAAAGLKATFTGPMPTPAVAYLTQTFRAEAGIVISASHNPYYDNGIKFFSSEGTKLPDDIELAIEAELDKDIECVESAELGKATRLNDAAGRYIEFCKSTFPSDLSLANVKIVVDCAHGATYHIAPNVFKELGADVVAMGVEPNGTNINAEVGATDVRALQKRVVEEQAHLGLAFDGDGDRIIMVDHLGNKIDGDQIAYIIARDALRRGELKGGVVGTLMTNLGMENGLKQLGIPFVRAAVGDRYVMEQLLAKGWKIGAENSGHVILLDKVTTGDAIVAALQVLASVVGSEMTLHDLSQGMTLYPQVLENVRFVGNSNPLEAQAVLDSVAAVEAELGDKGRVLLRKSGTEPLIRVMVEGEDAELVQSSALKIAEAVKASC</sequence>
<organism>
    <name type="scientific">Vibrio campbellii (strain ATCC BAA-1116)</name>
    <dbReference type="NCBI Taxonomy" id="2902295"/>
    <lineage>
        <taxon>Bacteria</taxon>
        <taxon>Pseudomonadati</taxon>
        <taxon>Pseudomonadota</taxon>
        <taxon>Gammaproteobacteria</taxon>
        <taxon>Vibrionales</taxon>
        <taxon>Vibrionaceae</taxon>
        <taxon>Vibrio</taxon>
    </lineage>
</organism>
<accession>A7MUV2</accession>
<comment type="function">
    <text evidence="1">Catalyzes the conversion of glucosamine-6-phosphate to glucosamine-1-phosphate.</text>
</comment>
<comment type="catalytic activity">
    <reaction evidence="1">
        <text>alpha-D-glucosamine 1-phosphate = D-glucosamine 6-phosphate</text>
        <dbReference type="Rhea" id="RHEA:23424"/>
        <dbReference type="ChEBI" id="CHEBI:58516"/>
        <dbReference type="ChEBI" id="CHEBI:58725"/>
        <dbReference type="EC" id="5.4.2.10"/>
    </reaction>
</comment>
<comment type="cofactor">
    <cofactor evidence="1">
        <name>Mg(2+)</name>
        <dbReference type="ChEBI" id="CHEBI:18420"/>
    </cofactor>
    <text evidence="1">Binds 1 Mg(2+) ion per subunit.</text>
</comment>
<comment type="PTM">
    <text evidence="1">Activated by phosphorylation.</text>
</comment>
<comment type="similarity">
    <text evidence="1">Belongs to the phosphohexose mutase family.</text>
</comment>
<feature type="chain" id="PRO_0000318621" description="Phosphoglucosamine mutase">
    <location>
        <begin position="1"/>
        <end position="446"/>
    </location>
</feature>
<feature type="active site" description="Phosphoserine intermediate" evidence="1">
    <location>
        <position position="103"/>
    </location>
</feature>
<feature type="binding site" description="via phosphate group" evidence="1">
    <location>
        <position position="103"/>
    </location>
    <ligand>
        <name>Mg(2+)</name>
        <dbReference type="ChEBI" id="CHEBI:18420"/>
    </ligand>
</feature>
<feature type="binding site" evidence="1">
    <location>
        <position position="242"/>
    </location>
    <ligand>
        <name>Mg(2+)</name>
        <dbReference type="ChEBI" id="CHEBI:18420"/>
    </ligand>
</feature>
<feature type="binding site" evidence="1">
    <location>
        <position position="244"/>
    </location>
    <ligand>
        <name>Mg(2+)</name>
        <dbReference type="ChEBI" id="CHEBI:18420"/>
    </ligand>
</feature>
<feature type="binding site" evidence="1">
    <location>
        <position position="246"/>
    </location>
    <ligand>
        <name>Mg(2+)</name>
        <dbReference type="ChEBI" id="CHEBI:18420"/>
    </ligand>
</feature>
<feature type="modified residue" description="Phosphoserine" evidence="1">
    <location>
        <position position="103"/>
    </location>
</feature>
<reference key="1">
    <citation type="submission" date="2007-08" db="EMBL/GenBank/DDBJ databases">
        <authorList>
            <consortium name="The Vibrio harveyi Genome Sequencing Project"/>
            <person name="Bassler B."/>
            <person name="Clifton S.W."/>
            <person name="Fulton L."/>
            <person name="Delehaunty K."/>
            <person name="Fronick C."/>
            <person name="Harrison M."/>
            <person name="Markivic C."/>
            <person name="Fulton R."/>
            <person name="Tin-Wollam A.-M."/>
            <person name="Shah N."/>
            <person name="Pepin K."/>
            <person name="Nash W."/>
            <person name="Thiruvilangam P."/>
            <person name="Bhonagiri V."/>
            <person name="Waters C."/>
            <person name="Tu K.C."/>
            <person name="Irgon J."/>
            <person name="Wilson R.K."/>
        </authorList>
    </citation>
    <scope>NUCLEOTIDE SEQUENCE [LARGE SCALE GENOMIC DNA]</scope>
    <source>
        <strain>ATCC BAA-1116 / BB120</strain>
    </source>
</reference>
<evidence type="ECO:0000255" key="1">
    <source>
        <dbReference type="HAMAP-Rule" id="MF_01554"/>
    </source>
</evidence>
<keyword id="KW-0413">Isomerase</keyword>
<keyword id="KW-0460">Magnesium</keyword>
<keyword id="KW-0479">Metal-binding</keyword>
<keyword id="KW-0597">Phosphoprotein</keyword>
<proteinExistence type="inferred from homology"/>
<name>GLMM_VIBC1</name>
<gene>
    <name evidence="1" type="primary">glmM</name>
    <name type="ordered locus">VIBHAR_03402</name>
</gene>
<protein>
    <recommendedName>
        <fullName evidence="1">Phosphoglucosamine mutase</fullName>
        <ecNumber evidence="1">5.4.2.10</ecNumber>
    </recommendedName>
</protein>